<gene>
    <name evidence="1" type="primary">dnaA</name>
    <name type="ordered locus">Sez_0001</name>
</gene>
<dbReference type="EMBL" id="CP001129">
    <property type="protein sequence ID" value="ACG61388.1"/>
    <property type="molecule type" value="Genomic_DNA"/>
</dbReference>
<dbReference type="RefSeq" id="WP_012514681.1">
    <property type="nucleotide sequence ID" value="NC_011134.1"/>
</dbReference>
<dbReference type="SMR" id="B4U5G8"/>
<dbReference type="KEGG" id="sez:Sez_0001"/>
<dbReference type="HOGENOM" id="CLU_026910_3_2_9"/>
<dbReference type="Proteomes" id="UP000001873">
    <property type="component" value="Chromosome"/>
</dbReference>
<dbReference type="GO" id="GO:0005737">
    <property type="term" value="C:cytoplasm"/>
    <property type="evidence" value="ECO:0007669"/>
    <property type="project" value="UniProtKB-SubCell"/>
</dbReference>
<dbReference type="GO" id="GO:0005886">
    <property type="term" value="C:plasma membrane"/>
    <property type="evidence" value="ECO:0007669"/>
    <property type="project" value="TreeGrafter"/>
</dbReference>
<dbReference type="GO" id="GO:0005524">
    <property type="term" value="F:ATP binding"/>
    <property type="evidence" value="ECO:0007669"/>
    <property type="project" value="UniProtKB-UniRule"/>
</dbReference>
<dbReference type="GO" id="GO:0016887">
    <property type="term" value="F:ATP hydrolysis activity"/>
    <property type="evidence" value="ECO:0007669"/>
    <property type="project" value="InterPro"/>
</dbReference>
<dbReference type="GO" id="GO:0003688">
    <property type="term" value="F:DNA replication origin binding"/>
    <property type="evidence" value="ECO:0007669"/>
    <property type="project" value="UniProtKB-UniRule"/>
</dbReference>
<dbReference type="GO" id="GO:0008289">
    <property type="term" value="F:lipid binding"/>
    <property type="evidence" value="ECO:0007669"/>
    <property type="project" value="UniProtKB-KW"/>
</dbReference>
<dbReference type="GO" id="GO:0006270">
    <property type="term" value="P:DNA replication initiation"/>
    <property type="evidence" value="ECO:0007669"/>
    <property type="project" value="UniProtKB-UniRule"/>
</dbReference>
<dbReference type="GO" id="GO:0006275">
    <property type="term" value="P:regulation of DNA replication"/>
    <property type="evidence" value="ECO:0007669"/>
    <property type="project" value="UniProtKB-UniRule"/>
</dbReference>
<dbReference type="CDD" id="cd00009">
    <property type="entry name" value="AAA"/>
    <property type="match status" value="1"/>
</dbReference>
<dbReference type="CDD" id="cd06571">
    <property type="entry name" value="Bac_DnaA_C"/>
    <property type="match status" value="1"/>
</dbReference>
<dbReference type="FunFam" id="1.10.1750.10:FF:000002">
    <property type="entry name" value="Chromosomal replication initiator protein DnaA"/>
    <property type="match status" value="1"/>
</dbReference>
<dbReference type="FunFam" id="3.40.50.300:FF:000668">
    <property type="entry name" value="Chromosomal replication initiator protein DnaA"/>
    <property type="match status" value="1"/>
</dbReference>
<dbReference type="Gene3D" id="1.10.1750.10">
    <property type="match status" value="1"/>
</dbReference>
<dbReference type="Gene3D" id="1.10.8.60">
    <property type="match status" value="1"/>
</dbReference>
<dbReference type="Gene3D" id="3.40.50.300">
    <property type="entry name" value="P-loop containing nucleotide triphosphate hydrolases"/>
    <property type="match status" value="1"/>
</dbReference>
<dbReference type="HAMAP" id="MF_00377">
    <property type="entry name" value="DnaA_bact"/>
    <property type="match status" value="1"/>
</dbReference>
<dbReference type="InterPro" id="IPR003593">
    <property type="entry name" value="AAA+_ATPase"/>
</dbReference>
<dbReference type="InterPro" id="IPR001957">
    <property type="entry name" value="Chromosome_initiator_DnaA"/>
</dbReference>
<dbReference type="InterPro" id="IPR020591">
    <property type="entry name" value="Chromosome_initiator_DnaA-like"/>
</dbReference>
<dbReference type="InterPro" id="IPR018312">
    <property type="entry name" value="Chromosome_initiator_DnaA_CS"/>
</dbReference>
<dbReference type="InterPro" id="IPR013159">
    <property type="entry name" value="DnaA_C"/>
</dbReference>
<dbReference type="InterPro" id="IPR013317">
    <property type="entry name" value="DnaA_dom"/>
</dbReference>
<dbReference type="InterPro" id="IPR027417">
    <property type="entry name" value="P-loop_NTPase"/>
</dbReference>
<dbReference type="InterPro" id="IPR010921">
    <property type="entry name" value="Trp_repressor/repl_initiator"/>
</dbReference>
<dbReference type="NCBIfam" id="TIGR00362">
    <property type="entry name" value="DnaA"/>
    <property type="match status" value="1"/>
</dbReference>
<dbReference type="PANTHER" id="PTHR30050">
    <property type="entry name" value="CHROMOSOMAL REPLICATION INITIATOR PROTEIN DNAA"/>
    <property type="match status" value="1"/>
</dbReference>
<dbReference type="PANTHER" id="PTHR30050:SF2">
    <property type="entry name" value="CHROMOSOMAL REPLICATION INITIATOR PROTEIN DNAA"/>
    <property type="match status" value="1"/>
</dbReference>
<dbReference type="Pfam" id="PF00308">
    <property type="entry name" value="Bac_DnaA"/>
    <property type="match status" value="1"/>
</dbReference>
<dbReference type="Pfam" id="PF08299">
    <property type="entry name" value="Bac_DnaA_C"/>
    <property type="match status" value="1"/>
</dbReference>
<dbReference type="PRINTS" id="PR00051">
    <property type="entry name" value="DNAA"/>
</dbReference>
<dbReference type="SMART" id="SM00382">
    <property type="entry name" value="AAA"/>
    <property type="match status" value="1"/>
</dbReference>
<dbReference type="SMART" id="SM00760">
    <property type="entry name" value="Bac_DnaA_C"/>
    <property type="match status" value="1"/>
</dbReference>
<dbReference type="SUPFAM" id="SSF52540">
    <property type="entry name" value="P-loop containing nucleoside triphosphate hydrolases"/>
    <property type="match status" value="1"/>
</dbReference>
<dbReference type="SUPFAM" id="SSF48295">
    <property type="entry name" value="TrpR-like"/>
    <property type="match status" value="1"/>
</dbReference>
<dbReference type="PROSITE" id="PS01008">
    <property type="entry name" value="DNAA"/>
    <property type="match status" value="1"/>
</dbReference>
<keyword id="KW-0067">ATP-binding</keyword>
<keyword id="KW-0963">Cytoplasm</keyword>
<keyword id="KW-0235">DNA replication</keyword>
<keyword id="KW-0238">DNA-binding</keyword>
<keyword id="KW-0446">Lipid-binding</keyword>
<keyword id="KW-0547">Nucleotide-binding</keyword>
<proteinExistence type="inferred from homology"/>
<reference key="1">
    <citation type="journal article" date="2008" name="PLoS ONE">
        <title>Genome sequence of a lancefield group C Streptococcus zooepidemicus strain causing epidemic nephritis: new information about an old disease.</title>
        <authorList>
            <person name="Beres S.B."/>
            <person name="Sesso R."/>
            <person name="Pinto S.W.L."/>
            <person name="Hoe N.P."/>
            <person name="Porcella S.F."/>
            <person name="Deleo F.R."/>
            <person name="Musser J.M."/>
        </authorList>
    </citation>
    <scope>NUCLEOTIDE SEQUENCE [LARGE SCALE GENOMIC DNA]</scope>
    <source>
        <strain>MGCS10565</strain>
    </source>
</reference>
<comment type="function">
    <text evidence="1">Plays an essential role in the initiation and regulation of chromosomal replication. ATP-DnaA binds to the origin of replication (oriC) to initiate formation of the DNA replication initiation complex once per cell cycle. Binds the DnaA box (a 9 base pair repeat at the origin) and separates the double-stranded (ds)DNA. Forms a right-handed helical filament on oriC DNA; dsDNA binds to the exterior of the filament while single-stranded (ss)DNA is stabiized in the filament's interior. The ATP-DnaA-oriC complex binds and stabilizes one strand of the AT-rich DNA unwinding element (DUE), permitting loading of DNA polymerase. After initiation quickly degrades to an ADP-DnaA complex that is not apt for DNA replication. Binds acidic phospholipids.</text>
</comment>
<comment type="subunit">
    <text evidence="1">Oligomerizes as a right-handed, spiral filament on DNA at oriC.</text>
</comment>
<comment type="subcellular location">
    <subcellularLocation>
        <location evidence="1">Cytoplasm</location>
    </subcellularLocation>
</comment>
<comment type="domain">
    <text evidence="1">Domain I is involved in oligomerization and binding regulators, domain II is flexibile and of varying length in different bacteria, domain III forms the AAA+ region, while domain IV binds dsDNA.</text>
</comment>
<comment type="similarity">
    <text evidence="1">Belongs to the DnaA family.</text>
</comment>
<sequence length="450" mass="51491">MTENEQIFWNRVLELAQSQLKQATYEFFVHDARLIKVDNHVATIFLDQMKELFWEKNLKDVILTAGFEVYNAQIAVDYVYEEDLIIEQQHQGQQGYTEQAFQQLPAVQSDLNPKYSFDNFIQGDENRWAVAASIAVANTPGTTYNPLFIWGGPGLGKTHLLNAIGNSVLLENPNARIKYITAENFINEFVVHIRLDTMDELKEKFRNLDLLLIDDIQSLAKKTLSGTQEEFFNTFNALHNNNKQIVLTSDRTPDHLNDLEDRLVTRFKWGLTVNITPPDFETRVAILTNKIQEYNFIFPQDTIEYLAGQFDSNVRDLEGALKDISLVANFKQIDTITVDIAAEAIRARKQDGPKMTVIPIEEIQAQVGKFYGVTVKEIKATKRTQDIVLARQVAMFLAREMTDNSLPKIGKEFGGRDHSTVLHAYNKIKNMIGQDESLRIEIETIKNKIK</sequence>
<organism>
    <name type="scientific">Streptococcus equi subsp. zooepidemicus (strain MGCS10565)</name>
    <dbReference type="NCBI Taxonomy" id="552526"/>
    <lineage>
        <taxon>Bacteria</taxon>
        <taxon>Bacillati</taxon>
        <taxon>Bacillota</taxon>
        <taxon>Bacilli</taxon>
        <taxon>Lactobacillales</taxon>
        <taxon>Streptococcaceae</taxon>
        <taxon>Streptococcus</taxon>
    </lineage>
</organism>
<feature type="chain" id="PRO_1000122019" description="Chromosomal replication initiator protein DnaA">
    <location>
        <begin position="1"/>
        <end position="450"/>
    </location>
</feature>
<feature type="region of interest" description="Domain I, interacts with DnaA modulators" evidence="1">
    <location>
        <begin position="1"/>
        <end position="84"/>
    </location>
</feature>
<feature type="region of interest" description="Domain II" evidence="1">
    <location>
        <begin position="84"/>
        <end position="109"/>
    </location>
</feature>
<feature type="region of interest" description="Domain III, AAA+ region" evidence="1">
    <location>
        <begin position="110"/>
        <end position="328"/>
    </location>
</feature>
<feature type="region of interest" description="Domain IV, binds dsDNA" evidence="1">
    <location>
        <begin position="329"/>
        <end position="450"/>
    </location>
</feature>
<feature type="binding site" evidence="1">
    <location>
        <position position="154"/>
    </location>
    <ligand>
        <name>ATP</name>
        <dbReference type="ChEBI" id="CHEBI:30616"/>
    </ligand>
</feature>
<feature type="binding site" evidence="1">
    <location>
        <position position="156"/>
    </location>
    <ligand>
        <name>ATP</name>
        <dbReference type="ChEBI" id="CHEBI:30616"/>
    </ligand>
</feature>
<feature type="binding site" evidence="1">
    <location>
        <position position="157"/>
    </location>
    <ligand>
        <name>ATP</name>
        <dbReference type="ChEBI" id="CHEBI:30616"/>
    </ligand>
</feature>
<feature type="binding site" evidence="1">
    <location>
        <position position="158"/>
    </location>
    <ligand>
        <name>ATP</name>
        <dbReference type="ChEBI" id="CHEBI:30616"/>
    </ligand>
</feature>
<protein>
    <recommendedName>
        <fullName evidence="1">Chromosomal replication initiator protein DnaA</fullName>
    </recommendedName>
</protein>
<name>DNAA_STREM</name>
<evidence type="ECO:0000255" key="1">
    <source>
        <dbReference type="HAMAP-Rule" id="MF_00377"/>
    </source>
</evidence>
<accession>B4U5G8</accession>